<comment type="function">
    <text evidence="1">Prion-like protein that has PrP(C)-like neuroprotective activity.</text>
</comment>
<comment type="subcellular location">
    <subcellularLocation>
        <location evidence="1">Cell membrane</location>
        <topology evidence="1">Lipid-anchor</topology>
        <topology evidence="1">GPI-anchor</topology>
    </subcellularLocation>
</comment>
<comment type="tissue specificity">
    <text evidence="4">Mainly expressed in brain. Also expressed in embryo and retina.</text>
</comment>
<comment type="similarity">
    <text evidence="5">Belongs to the SPRN family.</text>
</comment>
<dbReference type="EMBL" id="AJ490525">
    <property type="protein sequence ID" value="CAD35503.1"/>
    <property type="molecule type" value="mRNA"/>
</dbReference>
<dbReference type="EMBL" id="BC116568">
    <property type="protein sequence ID" value="AAI16569.1"/>
    <property type="molecule type" value="mRNA"/>
</dbReference>
<dbReference type="RefSeq" id="NP_945332.2">
    <property type="nucleotide sequence ID" value="NM_198981.2"/>
</dbReference>
<dbReference type="FunCoup" id="Q1JPW9">
    <property type="interactions" value="136"/>
</dbReference>
<dbReference type="STRING" id="7955.ENSDARP00000063824"/>
<dbReference type="GlyCosmos" id="Q1JPW9">
    <property type="glycosylation" value="1 site, No reported glycans"/>
</dbReference>
<dbReference type="PaxDb" id="7955-ENSDARP00000063824"/>
<dbReference type="Ensembl" id="ENSDART00000063825">
    <property type="protein sequence ID" value="ENSDARP00000063824"/>
    <property type="gene ID" value="ENSDARG00000056004"/>
</dbReference>
<dbReference type="GeneID" id="386702"/>
<dbReference type="KEGG" id="dre:386702"/>
<dbReference type="AGR" id="ZFIN:ZDB-GENE-031110-1"/>
<dbReference type="CTD" id="503542"/>
<dbReference type="ZFIN" id="ZDB-GENE-031110-1">
    <property type="gene designation" value="sprn"/>
</dbReference>
<dbReference type="eggNOG" id="ENOG502SCEE">
    <property type="taxonomic scope" value="Eukaryota"/>
</dbReference>
<dbReference type="HOGENOM" id="CLU_1694965_0_0_1"/>
<dbReference type="InParanoid" id="Q1JPW9"/>
<dbReference type="OMA" id="QVLATCW"/>
<dbReference type="OrthoDB" id="8923215at2759"/>
<dbReference type="PRO" id="PR:Q1JPW9"/>
<dbReference type="Proteomes" id="UP000000437">
    <property type="component" value="Chromosome 13"/>
</dbReference>
<dbReference type="Bgee" id="ENSDARG00000056004">
    <property type="expression patterns" value="Expressed in brain and 6 other cell types or tissues"/>
</dbReference>
<dbReference type="ExpressionAtlas" id="Q1JPW9">
    <property type="expression patterns" value="baseline and differential"/>
</dbReference>
<dbReference type="GO" id="GO:0005886">
    <property type="term" value="C:plasma membrane"/>
    <property type="evidence" value="ECO:0007669"/>
    <property type="project" value="UniProtKB-SubCell"/>
</dbReference>
<dbReference type="GO" id="GO:0098552">
    <property type="term" value="C:side of membrane"/>
    <property type="evidence" value="ECO:0007669"/>
    <property type="project" value="UniProtKB-KW"/>
</dbReference>
<dbReference type="InterPro" id="IPR029238">
    <property type="entry name" value="Shadoo"/>
</dbReference>
<dbReference type="PANTHER" id="PTHR28552">
    <property type="entry name" value="SHADOW OF PRION PROTEIN"/>
    <property type="match status" value="1"/>
</dbReference>
<dbReference type="PANTHER" id="PTHR28552:SF1">
    <property type="entry name" value="SHADOW OF PRION PROTEIN"/>
    <property type="match status" value="1"/>
</dbReference>
<evidence type="ECO:0000250" key="1"/>
<evidence type="ECO:0000255" key="2"/>
<evidence type="ECO:0000256" key="3">
    <source>
        <dbReference type="SAM" id="MobiDB-lite"/>
    </source>
</evidence>
<evidence type="ECO:0000269" key="4">
    <source>
    </source>
</evidence>
<evidence type="ECO:0000305" key="5"/>
<name>SPRN_DANRE</name>
<reference key="1">
    <citation type="journal article" date="2003" name="Gene">
        <title>Shadoo, a new protein highly conserved from fish to mammals and with similarity to prion protein.</title>
        <authorList>
            <person name="Premzl M."/>
            <person name="Sangiorgio L."/>
            <person name="Strumbo B."/>
            <person name="Marshall Graves J.A."/>
            <person name="Simonic T."/>
            <person name="Gready J.E."/>
        </authorList>
    </citation>
    <scope>NUCLEOTIDE SEQUENCE [MRNA]</scope>
    <scope>TISSUE SPECIFICITY</scope>
</reference>
<reference key="2">
    <citation type="submission" date="2006-05" db="EMBL/GenBank/DDBJ databases">
        <authorList>
            <consortium name="NIH - Zebrafish Gene Collection (ZGC) project"/>
        </authorList>
    </citation>
    <scope>NUCLEOTIDE SEQUENCE [LARGE SCALE MRNA]</scope>
    <source>
        <tissue>Eye</tissue>
    </source>
</reference>
<sequence length="132" mass="13858">MNRAVATCCIFLLLSAFLCDQVMSKGGRGGARGSARGTARGGRTSRARGSPAVRVAGAAAAGAAVALGAGGWYASAQRRPDDSSERGDDYYSNRTNWELYLARTSGATVHDSTITRLSALLLPINYMMHFAP</sequence>
<keyword id="KW-0034">Amyloid</keyword>
<keyword id="KW-1003">Cell membrane</keyword>
<keyword id="KW-0325">Glycoprotein</keyword>
<keyword id="KW-0336">GPI-anchor</keyword>
<keyword id="KW-0449">Lipoprotein</keyword>
<keyword id="KW-0472">Membrane</keyword>
<keyword id="KW-0640">Prion</keyword>
<keyword id="KW-1185">Reference proteome</keyword>
<keyword id="KW-0732">Signal</keyword>
<organism>
    <name type="scientific">Danio rerio</name>
    <name type="common">Zebrafish</name>
    <name type="synonym">Brachydanio rerio</name>
    <dbReference type="NCBI Taxonomy" id="7955"/>
    <lineage>
        <taxon>Eukaryota</taxon>
        <taxon>Metazoa</taxon>
        <taxon>Chordata</taxon>
        <taxon>Craniata</taxon>
        <taxon>Vertebrata</taxon>
        <taxon>Euteleostomi</taxon>
        <taxon>Actinopterygii</taxon>
        <taxon>Neopterygii</taxon>
        <taxon>Teleostei</taxon>
        <taxon>Ostariophysi</taxon>
        <taxon>Cypriniformes</taxon>
        <taxon>Danionidae</taxon>
        <taxon>Danioninae</taxon>
        <taxon>Danio</taxon>
    </lineage>
</organism>
<accession>Q1JPW9</accession>
<accession>Q70YK5</accession>
<feature type="signal peptide" evidence="2">
    <location>
        <begin position="1"/>
        <end position="24"/>
    </location>
</feature>
<feature type="chain" id="PRO_5000068607" description="Shadow of prion protein">
    <location>
        <begin position="25"/>
        <end position="107"/>
    </location>
</feature>
<feature type="propeptide" id="PRO_0000320174" description="Removed in mature form" evidence="2">
    <location>
        <begin position="108"/>
        <end position="132"/>
    </location>
</feature>
<feature type="region of interest" description="Disordered" evidence="3">
    <location>
        <begin position="26"/>
        <end position="50"/>
    </location>
</feature>
<feature type="compositionally biased region" description="Low complexity" evidence="3">
    <location>
        <begin position="33"/>
        <end position="50"/>
    </location>
</feature>
<feature type="lipid moiety-binding region" description="GPI-anchor amidated alanine" evidence="2">
    <location>
        <position position="107"/>
    </location>
</feature>
<feature type="glycosylation site" description="N-linked (GlcNAc...) asparagine" evidence="2">
    <location>
        <position position="93"/>
    </location>
</feature>
<feature type="sequence conflict" description="In Ref. 1; CAD35503." evidence="5" ref="1">
    <original>S</original>
    <variation>R</variation>
    <location>
        <position position="83"/>
    </location>
</feature>
<protein>
    <recommendedName>
        <fullName>Shadow of prion protein</fullName>
        <shortName>Protein shadoo</shortName>
    </recommendedName>
</protein>
<proteinExistence type="evidence at transcript level"/>
<gene>
    <name type="primary">sprn</name>
</gene>